<accession>Q6BZX4</accession>
<reference key="1">
    <citation type="journal article" date="2004" name="Nature">
        <title>Genome evolution in yeasts.</title>
        <authorList>
            <person name="Dujon B."/>
            <person name="Sherman D."/>
            <person name="Fischer G."/>
            <person name="Durrens P."/>
            <person name="Casaregola S."/>
            <person name="Lafontaine I."/>
            <person name="de Montigny J."/>
            <person name="Marck C."/>
            <person name="Neuveglise C."/>
            <person name="Talla E."/>
            <person name="Goffard N."/>
            <person name="Frangeul L."/>
            <person name="Aigle M."/>
            <person name="Anthouard V."/>
            <person name="Babour A."/>
            <person name="Barbe V."/>
            <person name="Barnay S."/>
            <person name="Blanchin S."/>
            <person name="Beckerich J.-M."/>
            <person name="Beyne E."/>
            <person name="Bleykasten C."/>
            <person name="Boisrame A."/>
            <person name="Boyer J."/>
            <person name="Cattolico L."/>
            <person name="Confanioleri F."/>
            <person name="de Daruvar A."/>
            <person name="Despons L."/>
            <person name="Fabre E."/>
            <person name="Fairhead C."/>
            <person name="Ferry-Dumazet H."/>
            <person name="Groppi A."/>
            <person name="Hantraye F."/>
            <person name="Hennequin C."/>
            <person name="Jauniaux N."/>
            <person name="Joyet P."/>
            <person name="Kachouri R."/>
            <person name="Kerrest A."/>
            <person name="Koszul R."/>
            <person name="Lemaire M."/>
            <person name="Lesur I."/>
            <person name="Ma L."/>
            <person name="Muller H."/>
            <person name="Nicaud J.-M."/>
            <person name="Nikolski M."/>
            <person name="Oztas S."/>
            <person name="Ozier-Kalogeropoulos O."/>
            <person name="Pellenz S."/>
            <person name="Potier S."/>
            <person name="Richard G.-F."/>
            <person name="Straub M.-L."/>
            <person name="Suleau A."/>
            <person name="Swennen D."/>
            <person name="Tekaia F."/>
            <person name="Wesolowski-Louvel M."/>
            <person name="Westhof E."/>
            <person name="Wirth B."/>
            <person name="Zeniou-Meyer M."/>
            <person name="Zivanovic Y."/>
            <person name="Bolotin-Fukuhara M."/>
            <person name="Thierry A."/>
            <person name="Bouchier C."/>
            <person name="Caudron B."/>
            <person name="Scarpelli C."/>
            <person name="Gaillardin C."/>
            <person name="Weissenbach J."/>
            <person name="Wincker P."/>
            <person name="Souciet J.-L."/>
        </authorList>
    </citation>
    <scope>NUCLEOTIDE SEQUENCE [LARGE SCALE GENOMIC DNA]</scope>
    <source>
        <strain>CLIB 122 / E 150</strain>
    </source>
</reference>
<organism>
    <name type="scientific">Yarrowia lipolytica (strain CLIB 122 / E 150)</name>
    <name type="common">Yeast</name>
    <name type="synonym">Candida lipolytica</name>
    <dbReference type="NCBI Taxonomy" id="284591"/>
    <lineage>
        <taxon>Eukaryota</taxon>
        <taxon>Fungi</taxon>
        <taxon>Dikarya</taxon>
        <taxon>Ascomycota</taxon>
        <taxon>Saccharomycotina</taxon>
        <taxon>Dipodascomycetes</taxon>
        <taxon>Dipodascales</taxon>
        <taxon>Dipodascales incertae sedis</taxon>
        <taxon>Yarrowia</taxon>
    </lineage>
</organism>
<dbReference type="EMBL" id="CR382132">
    <property type="protein sequence ID" value="CAG78851.1"/>
    <property type="molecule type" value="Genomic_DNA"/>
</dbReference>
<dbReference type="RefSeq" id="XP_506038.1">
    <property type="nucleotide sequence ID" value="XM_506038.1"/>
</dbReference>
<dbReference type="SMR" id="Q6BZX4"/>
<dbReference type="FunCoup" id="Q6BZX4">
    <property type="interactions" value="504"/>
</dbReference>
<dbReference type="STRING" id="284591.Q6BZX4"/>
<dbReference type="EnsemblFungi" id="CAG78851">
    <property type="protein sequence ID" value="CAG78851"/>
    <property type="gene ID" value="YALI0_F30173g"/>
</dbReference>
<dbReference type="KEGG" id="yli:2908598"/>
<dbReference type="VEuPathDB" id="FungiDB:YALI0_F30173g"/>
<dbReference type="HOGENOM" id="CLU_027280_4_0_1"/>
<dbReference type="InParanoid" id="Q6BZX4"/>
<dbReference type="OMA" id="KGFIIIE"/>
<dbReference type="OrthoDB" id="72396at4891"/>
<dbReference type="Proteomes" id="UP000001300">
    <property type="component" value="Chromosome F"/>
</dbReference>
<dbReference type="GO" id="GO:0000439">
    <property type="term" value="C:transcription factor TFIIH core complex"/>
    <property type="evidence" value="ECO:0000318"/>
    <property type="project" value="GO_Central"/>
</dbReference>
<dbReference type="GO" id="GO:0005675">
    <property type="term" value="C:transcription factor TFIIH holo complex"/>
    <property type="evidence" value="ECO:0000318"/>
    <property type="project" value="GO_Central"/>
</dbReference>
<dbReference type="GO" id="GO:0001671">
    <property type="term" value="F:ATPase activator activity"/>
    <property type="evidence" value="ECO:0007669"/>
    <property type="project" value="InterPro"/>
</dbReference>
<dbReference type="GO" id="GO:0003690">
    <property type="term" value="F:double-stranded DNA binding"/>
    <property type="evidence" value="ECO:0000318"/>
    <property type="project" value="GO_Central"/>
</dbReference>
<dbReference type="GO" id="GO:0016251">
    <property type="term" value="F:RNA polymerase II general transcription initiation factor activity"/>
    <property type="evidence" value="ECO:0007669"/>
    <property type="project" value="EnsemblFungi"/>
</dbReference>
<dbReference type="GO" id="GO:0006289">
    <property type="term" value="P:nucleotide-excision repair"/>
    <property type="evidence" value="ECO:0000318"/>
    <property type="project" value="GO_Central"/>
</dbReference>
<dbReference type="GO" id="GO:0006367">
    <property type="term" value="P:transcription initiation at RNA polymerase II promoter"/>
    <property type="evidence" value="ECO:0007669"/>
    <property type="project" value="EnsemblFungi"/>
</dbReference>
<dbReference type="FunFam" id="3.30.70.2610:FF:000001">
    <property type="entry name" value="General transcription factor IIH subunit 4"/>
    <property type="match status" value="1"/>
</dbReference>
<dbReference type="Gene3D" id="3.30.70.2610">
    <property type="match status" value="1"/>
</dbReference>
<dbReference type="InterPro" id="IPR040662">
    <property type="entry name" value="Tfb2_C"/>
</dbReference>
<dbReference type="InterPro" id="IPR004598">
    <property type="entry name" value="TFIIH_p52/Tfb2"/>
</dbReference>
<dbReference type="NCBIfam" id="TIGR00625">
    <property type="entry name" value="tfb2"/>
    <property type="match status" value="1"/>
</dbReference>
<dbReference type="PANTHER" id="PTHR13152:SF0">
    <property type="entry name" value="GENERAL TRANSCRIPTION FACTOR IIH SUBUNIT 4"/>
    <property type="match status" value="1"/>
</dbReference>
<dbReference type="PANTHER" id="PTHR13152">
    <property type="entry name" value="TFIIH, POLYPEPTIDE 4"/>
    <property type="match status" value="1"/>
</dbReference>
<dbReference type="Pfam" id="PF03849">
    <property type="entry name" value="Tfb2"/>
    <property type="match status" value="1"/>
</dbReference>
<dbReference type="Pfam" id="PF18307">
    <property type="entry name" value="Tfb2_C"/>
    <property type="match status" value="1"/>
</dbReference>
<comment type="function">
    <text evidence="2">Component of the general transcription and DNA repair factor IIH (TFIIH) core complex, which is involved in general and transcription-coupled nucleotide excision repair (NER) of damaged DNA and, when complexed to TFIIK, in RNA transcription by RNA polymerase II. In NER, TFIIH acts by opening DNA around the lesion to allow the excision of the damaged oligonucleotide and its replacement by a new DNA fragment. In transcription, TFIIH has an essential role in transcription initiation. When the pre-initiation complex (PIC) has been established, TFIIH is required for promoter opening and promoter escape. Phosphorylation of the C-terminal tail (CTD) of the largest subunit of RNA polymerase II by the kinase module TFIIK controls the initiation of transcription.</text>
</comment>
<comment type="subunit">
    <text evidence="2">Component of the 7-subunit TFIIH core complex composed of XPB/SSL2, XPD/RAD3, SSL1, TFB1, TFB2, TFB4 and TFB5, which is active in NER. The core complex associates with the 3-subunit CTD-kinase module TFIIK composed of CCL1, KIN28 and TFB3 to form the 10-subunit holoenzyme (holo-TFIIH) active in transcription.</text>
</comment>
<comment type="subcellular location">
    <subcellularLocation>
        <location evidence="1">Nucleus</location>
    </subcellularLocation>
</comment>
<comment type="similarity">
    <text evidence="3">Belongs to the TFB2 family.</text>
</comment>
<proteinExistence type="inferred from homology"/>
<evidence type="ECO:0000250" key="1"/>
<evidence type="ECO:0000250" key="2">
    <source>
        <dbReference type="UniProtKB" id="Q02939"/>
    </source>
</evidence>
<evidence type="ECO:0000305" key="3"/>
<gene>
    <name type="primary">TFB2</name>
    <name type="ordered locus">YALI0F30173g</name>
</gene>
<protein>
    <recommendedName>
        <fullName>General transcription and DNA repair factor IIH subunit TFB2</fullName>
        <shortName>TFIIH subunit TFB2</shortName>
    </recommendedName>
    <alternativeName>
        <fullName>RNA polymerase II transcription factor B subunit 2</fullName>
    </alternativeName>
</protein>
<sequence length="467" mass="52631">MTSQFKNSINDYLEGLPEAVLTRLYQSPATCLAVFRLLPALARTLIMGMIFNPDPIAVADVDALVKPSSQRLKLETQKKLRLLHIFTETQAHIIINPTFKKNLRAALVGGDQNISFGVPCDTEDKHKVDVAFLDAHAVSQWEMILHFMVGTSIGRTPSDGVLNLLKHSGLMEPERGGLRITNAGFQFLLQDVNAQIWTLLLQYLNMSEYLQMDPVDVLNFIFMLGSLELGQDYSLSALSETQKHMLEDLRDYGIVYQRKASSRRFYPTRLATTLTSETAALRTASQSMEAATQDTISSSVAADSGFIILETNFRLYAYTESPLQIAVLNLFVNLKTRFANMVTGQINRDSVRFALSNGITAEQIITYLSVHAHPRMKGMEHVLPPTVVDQIKLWQLEMDRIRATDGYLFSEFKNFDEYKDVSTYAKELGVLLYENPGKRKFVSTLAGSQQIVEFVKRRNQKHRSSAN</sequence>
<name>TFB2_YARLI</name>
<feature type="chain" id="PRO_0000119267" description="General transcription and DNA repair factor IIH subunit TFB2">
    <location>
        <begin position="1"/>
        <end position="467"/>
    </location>
</feature>
<keyword id="KW-0227">DNA damage</keyword>
<keyword id="KW-0234">DNA repair</keyword>
<keyword id="KW-0539">Nucleus</keyword>
<keyword id="KW-1185">Reference proteome</keyword>
<keyword id="KW-0804">Transcription</keyword>
<keyword id="KW-0805">Transcription regulation</keyword>